<proteinExistence type="evidence at transcript level"/>
<protein>
    <recommendedName>
        <fullName>Basic phospholipase A2</fullName>
        <shortName>svPLA2</shortName>
        <ecNumber>3.1.1.4</ecNumber>
    </recommendedName>
    <alternativeName>
        <fullName>Phosphatidylcholine 2-acylhydrolase</fullName>
    </alternativeName>
</protein>
<reference key="1">
    <citation type="submission" date="1999-11" db="EMBL/GenBank/DDBJ databases">
        <title>A novel PLA2-like cDNA clone from sea snake venom.</title>
        <authorList>
            <person name="Wei J."/>
            <person name="Yang W."/>
            <person name="Zhao G."/>
            <person name="Zhong X."/>
            <person name="Xu A."/>
        </authorList>
    </citation>
    <scope>NUCLEOTIDE SEQUENCE [MRNA]</scope>
</reference>
<evidence type="ECO:0000250" key="1"/>
<evidence type="ECO:0000255" key="2"/>
<evidence type="ECO:0000255" key="3">
    <source>
        <dbReference type="PROSITE-ProRule" id="PRU10035"/>
    </source>
</evidence>
<evidence type="ECO:0000255" key="4">
    <source>
        <dbReference type="PROSITE-ProRule" id="PRU10036"/>
    </source>
</evidence>
<evidence type="ECO:0000305" key="5"/>
<name>PA2B0_HYDHA</name>
<organism>
    <name type="scientific">Hydrophis hardwickii</name>
    <name type="common">Hardwick's spine-bellied seasnake</name>
    <name type="synonym">Lapemis hardwickii</name>
    <dbReference type="NCBI Taxonomy" id="8781"/>
    <lineage>
        <taxon>Eukaryota</taxon>
        <taxon>Metazoa</taxon>
        <taxon>Chordata</taxon>
        <taxon>Craniata</taxon>
        <taxon>Vertebrata</taxon>
        <taxon>Euteleostomi</taxon>
        <taxon>Lepidosauria</taxon>
        <taxon>Squamata</taxon>
        <taxon>Bifurcata</taxon>
        <taxon>Unidentata</taxon>
        <taxon>Episquamata</taxon>
        <taxon>Toxicofera</taxon>
        <taxon>Serpentes</taxon>
        <taxon>Colubroidea</taxon>
        <taxon>Elapidae</taxon>
        <taxon>Hydrophiinae</taxon>
        <taxon>Hydrophis</taxon>
    </lineage>
</organism>
<sequence>MYPAHLLVLLAVCVSLLGAASIPPLPLNLVQFSYVITCANHGRRSSLDYADYGCYCGAGGSGTPVDELDRCCQIHDDCYGEAEKQGCYPKMLIYDYYCGSDGPYCRNVKKKCNRMVCDCDVAAAKCFARNAYNNANYNIDTNKRCK</sequence>
<accession>Q8UW08</accession>
<dbReference type="EC" id="3.1.1.4"/>
<dbReference type="EMBL" id="AF205378">
    <property type="protein sequence ID" value="AAL54920.1"/>
    <property type="molecule type" value="mRNA"/>
</dbReference>
<dbReference type="SMR" id="Q8UW08"/>
<dbReference type="GO" id="GO:0005576">
    <property type="term" value="C:extracellular region"/>
    <property type="evidence" value="ECO:0007669"/>
    <property type="project" value="UniProtKB-SubCell"/>
</dbReference>
<dbReference type="GO" id="GO:0005509">
    <property type="term" value="F:calcium ion binding"/>
    <property type="evidence" value="ECO:0007669"/>
    <property type="project" value="InterPro"/>
</dbReference>
<dbReference type="GO" id="GO:0047498">
    <property type="term" value="F:calcium-dependent phospholipase A2 activity"/>
    <property type="evidence" value="ECO:0007669"/>
    <property type="project" value="TreeGrafter"/>
</dbReference>
<dbReference type="GO" id="GO:0005543">
    <property type="term" value="F:phospholipid binding"/>
    <property type="evidence" value="ECO:0007669"/>
    <property type="project" value="TreeGrafter"/>
</dbReference>
<dbReference type="GO" id="GO:0090729">
    <property type="term" value="F:toxin activity"/>
    <property type="evidence" value="ECO:0007669"/>
    <property type="project" value="UniProtKB-KW"/>
</dbReference>
<dbReference type="GO" id="GO:0050482">
    <property type="term" value="P:arachidonate secretion"/>
    <property type="evidence" value="ECO:0007669"/>
    <property type="project" value="InterPro"/>
</dbReference>
<dbReference type="GO" id="GO:0016042">
    <property type="term" value="P:lipid catabolic process"/>
    <property type="evidence" value="ECO:0007669"/>
    <property type="project" value="UniProtKB-KW"/>
</dbReference>
<dbReference type="GO" id="GO:0006644">
    <property type="term" value="P:phospholipid metabolic process"/>
    <property type="evidence" value="ECO:0007669"/>
    <property type="project" value="InterPro"/>
</dbReference>
<dbReference type="CDD" id="cd00125">
    <property type="entry name" value="PLA2c"/>
    <property type="match status" value="1"/>
</dbReference>
<dbReference type="FunFam" id="1.20.90.10:FF:000007">
    <property type="entry name" value="Acidic phospholipase A2"/>
    <property type="match status" value="1"/>
</dbReference>
<dbReference type="Gene3D" id="1.20.90.10">
    <property type="entry name" value="Phospholipase A2 domain"/>
    <property type="match status" value="1"/>
</dbReference>
<dbReference type="InterPro" id="IPR001211">
    <property type="entry name" value="PLipase_A2"/>
</dbReference>
<dbReference type="InterPro" id="IPR033112">
    <property type="entry name" value="PLipase_A2_Asp_AS"/>
</dbReference>
<dbReference type="InterPro" id="IPR016090">
    <property type="entry name" value="PLipase_A2_dom"/>
</dbReference>
<dbReference type="InterPro" id="IPR036444">
    <property type="entry name" value="PLipase_A2_dom_sf"/>
</dbReference>
<dbReference type="InterPro" id="IPR033113">
    <property type="entry name" value="PLipase_A2_His_AS"/>
</dbReference>
<dbReference type="PANTHER" id="PTHR11716:SF106">
    <property type="entry name" value="PHOSPHOLIPASE A2 A2-ACTITOXIN-UCS2A-LIKE"/>
    <property type="match status" value="1"/>
</dbReference>
<dbReference type="PANTHER" id="PTHR11716">
    <property type="entry name" value="PHOSPHOLIPASE A2 FAMILY MEMBER"/>
    <property type="match status" value="1"/>
</dbReference>
<dbReference type="Pfam" id="PF00068">
    <property type="entry name" value="Phospholip_A2_1"/>
    <property type="match status" value="1"/>
</dbReference>
<dbReference type="PRINTS" id="PR00389">
    <property type="entry name" value="PHPHLIPASEA2"/>
</dbReference>
<dbReference type="SMART" id="SM00085">
    <property type="entry name" value="PA2c"/>
    <property type="match status" value="1"/>
</dbReference>
<dbReference type="SUPFAM" id="SSF48619">
    <property type="entry name" value="Phospholipase A2, PLA2"/>
    <property type="match status" value="1"/>
</dbReference>
<dbReference type="PROSITE" id="PS00119">
    <property type="entry name" value="PA2_ASP"/>
    <property type="match status" value="1"/>
</dbReference>
<dbReference type="PROSITE" id="PS00118">
    <property type="entry name" value="PA2_HIS"/>
    <property type="match status" value="1"/>
</dbReference>
<feature type="signal peptide" evidence="2">
    <location>
        <begin position="1"/>
        <end position="21"/>
    </location>
</feature>
<feature type="propeptide" id="PRO_0000022876" evidence="1">
    <location>
        <begin position="22"/>
        <end position="27"/>
    </location>
</feature>
<feature type="chain" id="PRO_0000022877" description="Basic phospholipase A2">
    <location>
        <begin position="28"/>
        <end position="146"/>
    </location>
</feature>
<feature type="active site" evidence="1">
    <location>
        <position position="75"/>
    </location>
</feature>
<feature type="active site" evidence="1">
    <location>
        <position position="120"/>
    </location>
</feature>
<feature type="binding site" evidence="1">
    <location>
        <position position="55"/>
    </location>
    <ligand>
        <name>Ca(2+)</name>
        <dbReference type="ChEBI" id="CHEBI:29108"/>
    </ligand>
</feature>
<feature type="binding site" evidence="1">
    <location>
        <position position="57"/>
    </location>
    <ligand>
        <name>Ca(2+)</name>
        <dbReference type="ChEBI" id="CHEBI:29108"/>
    </ligand>
</feature>
<feature type="binding site" evidence="1">
    <location>
        <position position="59"/>
    </location>
    <ligand>
        <name>Ca(2+)</name>
        <dbReference type="ChEBI" id="CHEBI:29108"/>
    </ligand>
</feature>
<feature type="binding site" evidence="1">
    <location>
        <position position="76"/>
    </location>
    <ligand>
        <name>Ca(2+)</name>
        <dbReference type="ChEBI" id="CHEBI:29108"/>
    </ligand>
</feature>
<feature type="disulfide bond" evidence="1">
    <location>
        <begin position="38"/>
        <end position="98"/>
    </location>
</feature>
<feature type="disulfide bond" evidence="1">
    <location>
        <begin position="54"/>
        <end position="145"/>
    </location>
</feature>
<feature type="disulfide bond" evidence="1">
    <location>
        <begin position="56"/>
        <end position="72"/>
    </location>
</feature>
<feature type="disulfide bond" evidence="1">
    <location>
        <begin position="71"/>
        <end position="126"/>
    </location>
</feature>
<feature type="disulfide bond" evidence="1">
    <location>
        <begin position="78"/>
        <end position="119"/>
    </location>
</feature>
<feature type="disulfide bond" evidence="1">
    <location>
        <begin position="87"/>
        <end position="112"/>
    </location>
</feature>
<feature type="disulfide bond" evidence="1">
    <location>
        <begin position="105"/>
        <end position="117"/>
    </location>
</feature>
<keyword id="KW-0106">Calcium</keyword>
<keyword id="KW-1015">Disulfide bond</keyword>
<keyword id="KW-0378">Hydrolase</keyword>
<keyword id="KW-0442">Lipid degradation</keyword>
<keyword id="KW-0443">Lipid metabolism</keyword>
<keyword id="KW-0479">Metal-binding</keyword>
<keyword id="KW-0528">Neurotoxin</keyword>
<keyword id="KW-0638">Presynaptic neurotoxin</keyword>
<keyword id="KW-0964">Secreted</keyword>
<keyword id="KW-0732">Signal</keyword>
<keyword id="KW-0800">Toxin</keyword>
<comment type="function">
    <text evidence="1">Snake venom phospholipase A2 (PLA2) that inhibits neuromuscular transmission by blocking acetylcholine release from the nerve termini. PLA2 catalyzes the calcium-dependent hydrolysis of the 2-acyl groups in 3-sn-phosphoglycerides (By similarity).</text>
</comment>
<comment type="catalytic activity">
    <reaction evidence="3 4">
        <text>a 1,2-diacyl-sn-glycero-3-phosphocholine + H2O = a 1-acyl-sn-glycero-3-phosphocholine + a fatty acid + H(+)</text>
        <dbReference type="Rhea" id="RHEA:15801"/>
        <dbReference type="ChEBI" id="CHEBI:15377"/>
        <dbReference type="ChEBI" id="CHEBI:15378"/>
        <dbReference type="ChEBI" id="CHEBI:28868"/>
        <dbReference type="ChEBI" id="CHEBI:57643"/>
        <dbReference type="ChEBI" id="CHEBI:58168"/>
        <dbReference type="EC" id="3.1.1.4"/>
    </reaction>
</comment>
<comment type="cofactor">
    <cofactor evidence="1">
        <name>Ca(2+)</name>
        <dbReference type="ChEBI" id="CHEBI:29108"/>
    </cofactor>
    <text evidence="1">Binds 1 Ca(2+) ion per subunit.</text>
</comment>
<comment type="subcellular location">
    <subcellularLocation>
        <location evidence="1">Secreted</location>
    </subcellularLocation>
</comment>
<comment type="tissue specificity">
    <text>Expressed by the venom gland.</text>
</comment>
<comment type="similarity">
    <text evidence="5">Belongs to the phospholipase A2 family. Group I subfamily. D49 sub-subfamily.</text>
</comment>